<comment type="function">
    <text evidence="2">Required for CpsD phosphorylation. Involved in the regulation of capsular polysaccharide biosynthesis. May be part of a complex that directs the coordinated polymerization and export to the cell surface of the capsular polysaccharide.</text>
</comment>
<comment type="pathway">
    <text>Capsule biogenesis; capsule polysaccharide biosynthesis.</text>
</comment>
<comment type="subcellular location">
    <subcellularLocation>
        <location evidence="3">Cell membrane</location>
        <topology evidence="3">Multi-pass membrane protein</topology>
    </subcellularLocation>
</comment>
<comment type="similarity">
    <text evidence="3">Belongs to the CpsC/CapA family.</text>
</comment>
<accession>Q54519</accession>
<accession>O52233</accession>
<organism>
    <name type="scientific">Streptococcus pneumoniae</name>
    <dbReference type="NCBI Taxonomy" id="1313"/>
    <lineage>
        <taxon>Bacteria</taxon>
        <taxon>Bacillati</taxon>
        <taxon>Bacillota</taxon>
        <taxon>Bacilli</taxon>
        <taxon>Lactobacillales</taxon>
        <taxon>Streptococcaceae</taxon>
        <taxon>Streptococcus</taxon>
    </lineage>
</organism>
<evidence type="ECO:0000255" key="1"/>
<evidence type="ECO:0000269" key="2">
    <source>
    </source>
</evidence>
<evidence type="ECO:0000305" key="3"/>
<sequence>MKEQNTLEIDVLQLFRALWKRKLVILLVAIITSSVAFAYSTFVIKPEFTSMTRIYVVNRDQGEKSGLTNQDLQAGSSLVKDYREIILSQDVLEEVVSDLKLDLTPKDLANKIKVTVPVDTRIVSVSVSDRVPEEASRIANSLREVAAQKIISITRVSDVTTLEEARPATSPSSPNIKRSTLIGFLAGVIGTSVIVLILELLDTRVKRPKDIEDTLQMTLLGIVPNLNKLK</sequence>
<proteinExistence type="inferred from homology"/>
<name>CPSC_STREE</name>
<gene>
    <name type="primary">cpsC</name>
    <name type="synonym">cps19fC</name>
</gene>
<reference key="1">
    <citation type="journal article" date="1994" name="Infect. Immun.">
        <title>Nucleotide sequence analysis of genes essential for capsular polysaccharide biosynthesis in Streptococcus pneumoniae type 19F.</title>
        <authorList>
            <person name="Guidolin A."/>
            <person name="Morona J.K."/>
            <person name="Morona R."/>
            <person name="Hansman D."/>
            <person name="Paton J.C."/>
        </authorList>
    </citation>
    <scope>NUCLEOTIDE SEQUENCE [GENOMIC DNA]</scope>
    <source>
        <strain>Serotype 19F</strain>
    </source>
</reference>
<reference key="2">
    <citation type="journal article" date="1998" name="Mol. Microbiol.">
        <title>Recombinational exchanges at the capsular polysaccharide biosynthetic locus lead to frequent serotype changes among natural isolates of Streptococcus pneumoniae.</title>
        <authorList>
            <person name="Coffey T.J."/>
            <person name="Enright M.C."/>
            <person name="Daniels M."/>
            <person name="Morona J.K."/>
            <person name="Morona R."/>
            <person name="Hryniewicz W."/>
            <person name="Paton J.C."/>
            <person name="Spratt B.G."/>
        </authorList>
    </citation>
    <scope>NUCLEOTIDE SEQUENCE [GENOMIC DNA]</scope>
    <source>
        <strain>NCTC 11906 / Serotype 19F</strain>
        <strain>PO-329 / Serotype 19F</strain>
        <strain>SP-496 / Serotype 19F</strain>
        <strain>SP-GA71 / Serotype 19F</strain>
        <strain>SP-VA92 / Serotype 19F</strain>
        <strain>SP-VA96 / Serotype 19F</strain>
    </source>
</reference>
<reference key="3">
    <citation type="journal article" date="2000" name="Mol. Microbiol.">
        <title>Tyrosine phosphorylation of CpsD negatively regulates capsular polysaccharide biosynthesis in Streptococcus pneumoniae.</title>
        <authorList>
            <person name="Morona J.K."/>
            <person name="Paton J.C."/>
            <person name="Miller D.C."/>
            <person name="Morona R."/>
        </authorList>
    </citation>
    <scope>FUNCTION</scope>
    <source>
        <strain>Rx1-19F / Serotype 19F</strain>
    </source>
</reference>
<protein>
    <recommendedName>
        <fullName>Capsular polysaccharide biosynthesis protein CpsC</fullName>
    </recommendedName>
</protein>
<feature type="chain" id="PRO_0000217231" description="Capsular polysaccharide biosynthesis protein CpsC">
    <location>
        <begin position="1"/>
        <end position="230"/>
    </location>
</feature>
<feature type="transmembrane region" description="Helical" evidence="1">
    <location>
        <begin position="24"/>
        <end position="44"/>
    </location>
</feature>
<feature type="transmembrane region" description="Helical" evidence="1">
    <location>
        <begin position="181"/>
        <end position="201"/>
    </location>
</feature>
<feature type="sequence variant" description="In strain: NCTC 11906.">
    <original>D</original>
    <variation>N</variation>
    <location>
        <position position="60"/>
    </location>
</feature>
<feature type="sequence variant" description="In strain: NCTC 11906.">
    <original>Q</original>
    <variation>H</variation>
    <location>
        <position position="216"/>
    </location>
</feature>
<dbReference type="EMBL" id="U09239">
    <property type="protein sequence ID" value="AAC44960.1"/>
    <property type="molecule type" value="Genomic_DNA"/>
</dbReference>
<dbReference type="EMBL" id="AF030367">
    <property type="protein sequence ID" value="AAC38718.1"/>
    <property type="molecule type" value="Genomic_DNA"/>
</dbReference>
<dbReference type="EMBL" id="AF030368">
    <property type="protein sequence ID" value="AAC38723.1"/>
    <property type="molecule type" value="Genomic_DNA"/>
</dbReference>
<dbReference type="EMBL" id="AF030369">
    <property type="protein sequence ID" value="AAC38728.1"/>
    <property type="molecule type" value="Genomic_DNA"/>
</dbReference>
<dbReference type="EMBL" id="AF030370">
    <property type="protein sequence ID" value="AAC38732.1"/>
    <property type="molecule type" value="Genomic_DNA"/>
</dbReference>
<dbReference type="EMBL" id="AF030371">
    <property type="protein sequence ID" value="AAC38737.1"/>
    <property type="molecule type" value="Genomic_DNA"/>
</dbReference>
<dbReference type="EMBL" id="AF030372">
    <property type="protein sequence ID" value="AAC38742.1"/>
    <property type="molecule type" value="Genomic_DNA"/>
</dbReference>
<dbReference type="RefSeq" id="WP_000664166.1">
    <property type="nucleotide sequence ID" value="NZ_WNIA01000046.1"/>
</dbReference>
<dbReference type="RefSeq" id="WP_000664170.1">
    <property type="nucleotide sequence ID" value="NZ_JBJYIZ010000036.1"/>
</dbReference>
<dbReference type="SMR" id="Q54519"/>
<dbReference type="OMA" id="KPRPMLN"/>
<dbReference type="UniPathway" id="UPA00934"/>
<dbReference type="GO" id="GO:0005886">
    <property type="term" value="C:plasma membrane"/>
    <property type="evidence" value="ECO:0007669"/>
    <property type="project" value="UniProtKB-SubCell"/>
</dbReference>
<dbReference type="GO" id="GO:0005351">
    <property type="term" value="F:carbohydrate:proton symporter activity"/>
    <property type="evidence" value="ECO:0007669"/>
    <property type="project" value="InterPro"/>
</dbReference>
<dbReference type="GO" id="GO:0004713">
    <property type="term" value="F:protein tyrosine kinase activity"/>
    <property type="evidence" value="ECO:0007669"/>
    <property type="project" value="TreeGrafter"/>
</dbReference>
<dbReference type="GO" id="GO:0045227">
    <property type="term" value="P:capsule polysaccharide biosynthetic process"/>
    <property type="evidence" value="ECO:0007669"/>
    <property type="project" value="UniProtKB-UniPathway"/>
</dbReference>
<dbReference type="GO" id="GO:0015774">
    <property type="term" value="P:polysaccharide transport"/>
    <property type="evidence" value="ECO:0007669"/>
    <property type="project" value="InterPro"/>
</dbReference>
<dbReference type="InterPro" id="IPR050445">
    <property type="entry name" value="Bact_polysacc_biosynth/exp"/>
</dbReference>
<dbReference type="InterPro" id="IPR005701">
    <property type="entry name" value="CpsC-like"/>
</dbReference>
<dbReference type="InterPro" id="IPR003856">
    <property type="entry name" value="LPS_length_determ_N_term"/>
</dbReference>
<dbReference type="NCBIfam" id="TIGR01006">
    <property type="entry name" value="polys_exp_MPA1"/>
    <property type="match status" value="1"/>
</dbReference>
<dbReference type="PANTHER" id="PTHR32309:SF13">
    <property type="entry name" value="FERRIC ENTEROBACTIN TRANSPORT PROTEIN FEPE"/>
    <property type="match status" value="1"/>
</dbReference>
<dbReference type="PANTHER" id="PTHR32309">
    <property type="entry name" value="TYROSINE-PROTEIN KINASE"/>
    <property type="match status" value="1"/>
</dbReference>
<dbReference type="Pfam" id="PF02706">
    <property type="entry name" value="Wzz"/>
    <property type="match status" value="1"/>
</dbReference>
<keyword id="KW-0972">Capsule biogenesis/degradation</keyword>
<keyword id="KW-1003">Cell membrane</keyword>
<keyword id="KW-0270">Exopolysaccharide synthesis</keyword>
<keyword id="KW-0472">Membrane</keyword>
<keyword id="KW-0812">Transmembrane</keyword>
<keyword id="KW-1133">Transmembrane helix</keyword>